<dbReference type="EMBL" id="CU928162">
    <property type="protein sequence ID" value="CAR09570.2"/>
    <property type="molecule type" value="Genomic_DNA"/>
</dbReference>
<dbReference type="RefSeq" id="WP_001277222.1">
    <property type="nucleotide sequence ID" value="NC_011745.1"/>
</dbReference>
<dbReference type="SMR" id="B7MZQ2"/>
<dbReference type="GeneID" id="86861043"/>
<dbReference type="KEGG" id="ecq:ECED1_3416"/>
<dbReference type="HOGENOM" id="CLU_130694_5_0_6"/>
<dbReference type="Proteomes" id="UP000000748">
    <property type="component" value="Chromosome"/>
</dbReference>
<dbReference type="GO" id="GO:0005737">
    <property type="term" value="C:cytoplasm"/>
    <property type="evidence" value="ECO:0007669"/>
    <property type="project" value="TreeGrafter"/>
</dbReference>
<dbReference type="Gene3D" id="3.30.1200.10">
    <property type="entry name" value="YggU-like"/>
    <property type="match status" value="1"/>
</dbReference>
<dbReference type="HAMAP" id="MF_00634">
    <property type="entry name" value="UPF0235"/>
    <property type="match status" value="1"/>
</dbReference>
<dbReference type="InterPro" id="IPR003746">
    <property type="entry name" value="DUF167"/>
</dbReference>
<dbReference type="InterPro" id="IPR036591">
    <property type="entry name" value="YggU-like_sf"/>
</dbReference>
<dbReference type="NCBIfam" id="TIGR00251">
    <property type="entry name" value="DUF167 family protein"/>
    <property type="match status" value="1"/>
</dbReference>
<dbReference type="NCBIfam" id="NF003466">
    <property type="entry name" value="PRK05090.1"/>
    <property type="match status" value="1"/>
</dbReference>
<dbReference type="PANTHER" id="PTHR13420">
    <property type="entry name" value="UPF0235 PROTEIN C15ORF40"/>
    <property type="match status" value="1"/>
</dbReference>
<dbReference type="PANTHER" id="PTHR13420:SF7">
    <property type="entry name" value="UPF0235 PROTEIN C15ORF40"/>
    <property type="match status" value="1"/>
</dbReference>
<dbReference type="Pfam" id="PF02594">
    <property type="entry name" value="DUF167"/>
    <property type="match status" value="1"/>
</dbReference>
<dbReference type="SMART" id="SM01152">
    <property type="entry name" value="DUF167"/>
    <property type="match status" value="1"/>
</dbReference>
<dbReference type="SUPFAM" id="SSF69786">
    <property type="entry name" value="YggU-like"/>
    <property type="match status" value="1"/>
</dbReference>
<protein>
    <recommendedName>
        <fullName evidence="1">UPF0235 protein YggU</fullName>
    </recommendedName>
</protein>
<gene>
    <name evidence="1" type="primary">yggU</name>
    <name type="ordered locus">ECED1_3416</name>
</gene>
<comment type="similarity">
    <text evidence="1">Belongs to the UPF0235 family.</text>
</comment>
<evidence type="ECO:0000255" key="1">
    <source>
        <dbReference type="HAMAP-Rule" id="MF_00634"/>
    </source>
</evidence>
<proteinExistence type="inferred from homology"/>
<organism>
    <name type="scientific">Escherichia coli O81 (strain ED1a)</name>
    <dbReference type="NCBI Taxonomy" id="585397"/>
    <lineage>
        <taxon>Bacteria</taxon>
        <taxon>Pseudomonadati</taxon>
        <taxon>Pseudomonadota</taxon>
        <taxon>Gammaproteobacteria</taxon>
        <taxon>Enterobacterales</taxon>
        <taxon>Enterobacteriaceae</taxon>
        <taxon>Escherichia</taxon>
    </lineage>
</organism>
<reference key="1">
    <citation type="journal article" date="2009" name="PLoS Genet.">
        <title>Organised genome dynamics in the Escherichia coli species results in highly diverse adaptive paths.</title>
        <authorList>
            <person name="Touchon M."/>
            <person name="Hoede C."/>
            <person name="Tenaillon O."/>
            <person name="Barbe V."/>
            <person name="Baeriswyl S."/>
            <person name="Bidet P."/>
            <person name="Bingen E."/>
            <person name="Bonacorsi S."/>
            <person name="Bouchier C."/>
            <person name="Bouvet O."/>
            <person name="Calteau A."/>
            <person name="Chiapello H."/>
            <person name="Clermont O."/>
            <person name="Cruveiller S."/>
            <person name="Danchin A."/>
            <person name="Diard M."/>
            <person name="Dossat C."/>
            <person name="Karoui M.E."/>
            <person name="Frapy E."/>
            <person name="Garry L."/>
            <person name="Ghigo J.M."/>
            <person name="Gilles A.M."/>
            <person name="Johnson J."/>
            <person name="Le Bouguenec C."/>
            <person name="Lescat M."/>
            <person name="Mangenot S."/>
            <person name="Martinez-Jehanne V."/>
            <person name="Matic I."/>
            <person name="Nassif X."/>
            <person name="Oztas S."/>
            <person name="Petit M.A."/>
            <person name="Pichon C."/>
            <person name="Rouy Z."/>
            <person name="Ruf C.S."/>
            <person name="Schneider D."/>
            <person name="Tourret J."/>
            <person name="Vacherie B."/>
            <person name="Vallenet D."/>
            <person name="Medigue C."/>
            <person name="Rocha E.P.C."/>
            <person name="Denamur E."/>
        </authorList>
    </citation>
    <scope>NUCLEOTIDE SEQUENCE [LARGE SCALE GENOMIC DNA]</scope>
    <source>
        <strain>ED1a</strain>
    </source>
</reference>
<accession>B7MZQ2</accession>
<sequence>MSAVTVNDDGLVLRLYIQPKASRDSIVGLHGDEVKVAITAPPVDGQANSHLVKFLGKQFRVAKSQVVIEKGELGRHKQIKIINPQQIPPEIAALIN</sequence>
<name>YGGU_ECO81</name>
<feature type="chain" id="PRO_1000147342" description="UPF0235 protein YggU">
    <location>
        <begin position="1"/>
        <end position="96"/>
    </location>
</feature>